<comment type="function">
    <text evidence="1 2 3">Component of the viral envelope that plays a central role in virus morphogenesis and assembly via its interactions with other viral proteins.</text>
</comment>
<comment type="subunit">
    <text evidence="1 2">Homomultimer. Interacts with envelope E protein in the budding compartment of the host cell, which is located between endoplasmic reticulum and the Golgi complex. Forms a complex with HE and S proteins. Interacts with nucleocapsid N protein. This interaction probably participates in RNA packaging into the virus.</text>
</comment>
<comment type="subcellular location">
    <subcellularLocation>
        <location evidence="1">Virion membrane</location>
        <topology evidence="1">Multi-pass membrane protein</topology>
    </subcellularLocation>
    <subcellularLocation>
        <location evidence="1">Host Golgi apparatus membrane</location>
        <topology evidence="1">Multi-pass membrane protein</topology>
    </subcellularLocation>
    <text evidence="1">Largely embedded in the lipid bilayer.</text>
</comment>
<comment type="similarity">
    <text evidence="1">Belongs to the betacoronaviruses M protein family.</text>
</comment>
<sequence length="228" mass="26051">MSSTTQAPGPVYQWTADEAVQFLKEWNFSLGIILLFITIILQFGYTSRSMFIYVVKMIILWLMWPLIIVLCMFNCVYALNNVYLGFSIVFTIVSVVMWIMYFVNSIRLFIRTGSWWSFNPETNNLMCIDMKGTVYVRPIIEDYHTLTATIIRGHFYMQGVKLGTGFSLSDLPAYVTVAKVSHLCTYKRAFLDKVDGVSGFAVYVKSKVGNYRLPSNKPSGADTVLLRI</sequence>
<name>VME1_CVMJH</name>
<organismHost>
    <name type="scientific">Mus musculus</name>
    <name type="common">Mouse</name>
    <dbReference type="NCBI Taxonomy" id="10090"/>
</organismHost>
<dbReference type="EMBL" id="X04223">
    <property type="protein sequence ID" value="CAA27802.1"/>
    <property type="molecule type" value="mRNA"/>
</dbReference>
<dbReference type="PIR" id="A25304">
    <property type="entry name" value="VGIHJH"/>
</dbReference>
<dbReference type="RefSeq" id="YP_209237.1">
    <property type="nucleotide sequence ID" value="AC_000192.1"/>
</dbReference>
<dbReference type="SMR" id="P08549"/>
<dbReference type="KEGG" id="vg:3283261"/>
<dbReference type="Proteomes" id="UP000007193">
    <property type="component" value="Genome"/>
</dbReference>
<dbReference type="GO" id="GO:0044178">
    <property type="term" value="C:host cell Golgi membrane"/>
    <property type="evidence" value="ECO:0007669"/>
    <property type="project" value="UniProtKB-SubCell"/>
</dbReference>
<dbReference type="GO" id="GO:0016020">
    <property type="term" value="C:membrane"/>
    <property type="evidence" value="ECO:0007669"/>
    <property type="project" value="UniProtKB-UniRule"/>
</dbReference>
<dbReference type="GO" id="GO:0019031">
    <property type="term" value="C:viral envelope"/>
    <property type="evidence" value="ECO:0007669"/>
    <property type="project" value="UniProtKB-UniRule"/>
</dbReference>
<dbReference type="GO" id="GO:0055036">
    <property type="term" value="C:virion membrane"/>
    <property type="evidence" value="ECO:0007669"/>
    <property type="project" value="UniProtKB-SubCell"/>
</dbReference>
<dbReference type="GO" id="GO:0039660">
    <property type="term" value="F:structural constituent of virion"/>
    <property type="evidence" value="ECO:0007669"/>
    <property type="project" value="UniProtKB-UniRule"/>
</dbReference>
<dbReference type="CDD" id="cd21568">
    <property type="entry name" value="HCoV-like_M"/>
    <property type="match status" value="1"/>
</dbReference>
<dbReference type="HAMAP" id="MF_04202">
    <property type="entry name" value="BETA_CORONA_M"/>
    <property type="match status" value="1"/>
</dbReference>
<dbReference type="InterPro" id="IPR002574">
    <property type="entry name" value="M_CoV"/>
</dbReference>
<dbReference type="InterPro" id="IPR044362">
    <property type="entry name" value="M_HCoV-like"/>
</dbReference>
<dbReference type="Pfam" id="PF01635">
    <property type="entry name" value="CoV_M"/>
    <property type="match status" value="1"/>
</dbReference>
<dbReference type="PROSITE" id="PS51927">
    <property type="entry name" value="COV_M"/>
    <property type="match status" value="1"/>
</dbReference>
<feature type="chain" id="PRO_0000106038" description="Membrane protein">
    <location>
        <begin position="1"/>
        <end position="228"/>
    </location>
</feature>
<feature type="topological domain" description="Virion surface" evidence="1">
    <location>
        <begin position="2"/>
        <end position="25"/>
    </location>
</feature>
<feature type="transmembrane region" description="Helical" evidence="1">
    <location>
        <begin position="26"/>
        <end position="46"/>
    </location>
</feature>
<feature type="topological domain" description="Intravirion" evidence="1">
    <location>
        <begin position="47"/>
        <end position="56"/>
    </location>
</feature>
<feature type="transmembrane region" description="Helical" evidence="1">
    <location>
        <begin position="57"/>
        <end position="77"/>
    </location>
</feature>
<feature type="topological domain" description="Virion surface" evidence="1">
    <location>
        <begin position="78"/>
        <end position="85"/>
    </location>
</feature>
<feature type="transmembrane region" description="Helical" evidence="1">
    <location>
        <begin position="86"/>
        <end position="106"/>
    </location>
</feature>
<feature type="topological domain" description="Intravirion" evidence="1">
    <location>
        <begin position="107"/>
        <end position="228"/>
    </location>
</feature>
<keyword id="KW-0325">Glycoprotein</keyword>
<keyword id="KW-1040">Host Golgi apparatus</keyword>
<keyword id="KW-1043">Host membrane</keyword>
<keyword id="KW-0945">Host-virus interaction</keyword>
<keyword id="KW-0472">Membrane</keyword>
<keyword id="KW-0812">Transmembrane</keyword>
<keyword id="KW-1133">Transmembrane helix</keyword>
<keyword id="KW-0261">Viral envelope protein</keyword>
<keyword id="KW-0899">Viral immunoevasion</keyword>
<keyword id="KW-0468">Viral matrix protein</keyword>
<keyword id="KW-0946">Virion</keyword>
<protein>
    <recommendedName>
        <fullName evidence="1">Membrane protein</fullName>
        <shortName evidence="1">M protein</shortName>
    </recommendedName>
    <alternativeName>
        <fullName evidence="1">E1 glycoprotein</fullName>
    </alternativeName>
    <alternativeName>
        <fullName evidence="1">Matrix glycoprotein</fullName>
    </alternativeName>
    <alternativeName>
        <fullName evidence="1">Membrane glycoprotein</fullName>
    </alternativeName>
</protein>
<reference key="1">
    <citation type="journal article" date="1986" name="Nucleic Acids Res.">
        <title>Coronavirus MHV-JHM: nucleotide sequence of the mRNA that encodes the membrane protein.</title>
        <authorList>
            <person name="Pfleiderer M."/>
            <person name="Skinner M.A."/>
            <person name="Siddell S.G."/>
        </authorList>
    </citation>
    <scope>NUCLEOTIDE SEQUENCE [MRNA]</scope>
</reference>
<reference key="2">
    <citation type="journal article" date="1999" name="Virology">
        <title>Release of coronavirus E protein in membrane vesicles from virus-infected cells and E protein-expressing cells.</title>
        <authorList>
            <person name="Maeda J."/>
            <person name="Maeda A."/>
            <person name="Makino S."/>
        </authorList>
    </citation>
    <scope>INTERACTION WITH E PROTEIN</scope>
</reference>
<reference key="3">
    <citation type="journal article" date="2000" name="J. Virol.">
        <title>Characterization of the coronavirus M protein and nucleocapsid interaction in infected cells.</title>
        <authorList>
            <person name="Narayanan K."/>
            <person name="Maeda A."/>
            <person name="Maeda J."/>
            <person name="Makino S."/>
        </authorList>
    </citation>
    <scope>FUNCTION</scope>
    <scope>INTERACTION WITH N PROTEIN</scope>
</reference>
<evidence type="ECO:0000255" key="1">
    <source>
        <dbReference type="HAMAP-Rule" id="MF_04202"/>
    </source>
</evidence>
<evidence type="ECO:0000255" key="2">
    <source>
        <dbReference type="PROSITE-ProRule" id="PRU01275"/>
    </source>
</evidence>
<evidence type="ECO:0000269" key="3">
    <source>
    </source>
</evidence>
<accession>P08549</accession>
<gene>
    <name evidence="1" type="primary">M</name>
    <name type="ORF">6</name>
</gene>
<proteinExistence type="evidence at protein level"/>
<organism>
    <name type="scientific">Murine coronavirus (strain JHM)</name>
    <name type="common">MHV-JHM</name>
    <name type="synonym">Murine hepatitis virus</name>
    <dbReference type="NCBI Taxonomy" id="11144"/>
    <lineage>
        <taxon>Viruses</taxon>
        <taxon>Riboviria</taxon>
        <taxon>Orthornavirae</taxon>
        <taxon>Pisuviricota</taxon>
        <taxon>Pisoniviricetes</taxon>
        <taxon>Nidovirales</taxon>
        <taxon>Cornidovirineae</taxon>
        <taxon>Coronaviridae</taxon>
        <taxon>Orthocoronavirinae</taxon>
        <taxon>Betacoronavirus</taxon>
        <taxon>Embecovirus</taxon>
        <taxon>Murine coronavirus</taxon>
    </lineage>
</organism>